<dbReference type="EMBL" id="X69765">
    <property type="protein sequence ID" value="CAA49422.1"/>
    <property type="molecule type" value="Genomic_DNA"/>
</dbReference>
<dbReference type="EMBL" id="X74151">
    <property type="protein sequence ID" value="CAA52249.1"/>
    <property type="molecule type" value="Genomic_DNA"/>
</dbReference>
<dbReference type="EMBL" id="Z28189">
    <property type="protein sequence ID" value="CAA82032.1"/>
    <property type="molecule type" value="Genomic_DNA"/>
</dbReference>
<dbReference type="EMBL" id="BK006944">
    <property type="protein sequence ID" value="DAA08977.1"/>
    <property type="molecule type" value="Genomic_DNA"/>
</dbReference>
<dbReference type="PIR" id="S34681">
    <property type="entry name" value="S34681"/>
</dbReference>
<dbReference type="RefSeq" id="NP_012732.1">
    <property type="nucleotide sequence ID" value="NM_001179755.1"/>
</dbReference>
<dbReference type="SMR" id="P32464"/>
<dbReference type="BioGRID" id="33933">
    <property type="interactions" value="78"/>
</dbReference>
<dbReference type="DIP" id="DIP-5425N"/>
<dbReference type="FunCoup" id="P32464">
    <property type="interactions" value="463"/>
</dbReference>
<dbReference type="IntAct" id="P32464">
    <property type="interactions" value="18"/>
</dbReference>
<dbReference type="MINT" id="P32464"/>
<dbReference type="STRING" id="4932.YKL189W"/>
<dbReference type="GlyGen" id="P32464">
    <property type="glycosylation" value="1 site"/>
</dbReference>
<dbReference type="iPTMnet" id="P32464"/>
<dbReference type="PaxDb" id="4932-YKL189W"/>
<dbReference type="PeptideAtlas" id="P32464"/>
<dbReference type="EnsemblFungi" id="YKL189W_mRNA">
    <property type="protein sequence ID" value="YKL189W"/>
    <property type="gene ID" value="YKL189W"/>
</dbReference>
<dbReference type="GeneID" id="853646"/>
<dbReference type="KEGG" id="sce:YKL189W"/>
<dbReference type="AGR" id="SGD:S000001672"/>
<dbReference type="SGD" id="S000001672">
    <property type="gene designation" value="HYM1"/>
</dbReference>
<dbReference type="VEuPathDB" id="FungiDB:YKL189W"/>
<dbReference type="eggNOG" id="KOG1566">
    <property type="taxonomic scope" value="Eukaryota"/>
</dbReference>
<dbReference type="GeneTree" id="ENSGT00390000004360"/>
<dbReference type="HOGENOM" id="CLU_035755_0_0_1"/>
<dbReference type="InParanoid" id="P32464"/>
<dbReference type="OMA" id="AYDHKES"/>
<dbReference type="OrthoDB" id="609103at2759"/>
<dbReference type="BioCyc" id="YEAST:G3O-31952-MONOMER"/>
<dbReference type="Reactome" id="R-SCE-6798695">
    <property type="pathway name" value="Neutrophil degranulation"/>
</dbReference>
<dbReference type="BioGRID-ORCS" id="853646">
    <property type="hits" value="3 hits in 10 CRISPR screens"/>
</dbReference>
<dbReference type="PRO" id="PR:P32464"/>
<dbReference type="Proteomes" id="UP000002311">
    <property type="component" value="Chromosome XI"/>
</dbReference>
<dbReference type="RNAct" id="P32464">
    <property type="molecule type" value="protein"/>
</dbReference>
<dbReference type="GO" id="GO:0005933">
    <property type="term" value="C:cellular bud"/>
    <property type="evidence" value="ECO:0000314"/>
    <property type="project" value="SGD"/>
</dbReference>
<dbReference type="GO" id="GO:0000131">
    <property type="term" value="C:incipient cellular bud site"/>
    <property type="evidence" value="ECO:0000314"/>
    <property type="project" value="SGD"/>
</dbReference>
<dbReference type="GO" id="GO:0043332">
    <property type="term" value="C:mating projection tip"/>
    <property type="evidence" value="ECO:0000314"/>
    <property type="project" value="SGD"/>
</dbReference>
<dbReference type="GO" id="GO:0044732">
    <property type="term" value="C:mitotic spindle pole body"/>
    <property type="evidence" value="ECO:0000314"/>
    <property type="project" value="CACAO"/>
</dbReference>
<dbReference type="GO" id="GO:0043539">
    <property type="term" value="F:protein serine/threonine kinase activator activity"/>
    <property type="evidence" value="ECO:0000318"/>
    <property type="project" value="GO_Central"/>
</dbReference>
<dbReference type="GO" id="GO:0007118">
    <property type="term" value="P:budding cell apical bud growth"/>
    <property type="evidence" value="ECO:0000315"/>
    <property type="project" value="SGD"/>
</dbReference>
<dbReference type="GO" id="GO:0035556">
    <property type="term" value="P:intracellular signal transduction"/>
    <property type="evidence" value="ECO:0000318"/>
    <property type="project" value="GO_Central"/>
</dbReference>
<dbReference type="GO" id="GO:0006355">
    <property type="term" value="P:regulation of DNA-templated transcription"/>
    <property type="evidence" value="ECO:0000315"/>
    <property type="project" value="SGD"/>
</dbReference>
<dbReference type="GO" id="GO:0000920">
    <property type="term" value="P:septum digestion after cytokinesis"/>
    <property type="evidence" value="ECO:0000315"/>
    <property type="project" value="SGD"/>
</dbReference>
<dbReference type="FunFam" id="1.25.10.10:FF:000513">
    <property type="entry name" value="Hym1p"/>
    <property type="match status" value="1"/>
</dbReference>
<dbReference type="Gene3D" id="1.25.10.10">
    <property type="entry name" value="Leucine-rich Repeat Variant"/>
    <property type="match status" value="1"/>
</dbReference>
<dbReference type="InterPro" id="IPR011989">
    <property type="entry name" value="ARM-like"/>
</dbReference>
<dbReference type="InterPro" id="IPR016024">
    <property type="entry name" value="ARM-type_fold"/>
</dbReference>
<dbReference type="InterPro" id="IPR013878">
    <property type="entry name" value="Mo25"/>
</dbReference>
<dbReference type="PANTHER" id="PTHR10182">
    <property type="entry name" value="CALCIUM-BINDING PROTEIN 39-RELATED"/>
    <property type="match status" value="1"/>
</dbReference>
<dbReference type="PANTHER" id="PTHR10182:SF3">
    <property type="entry name" value="PROTEIN MO25"/>
    <property type="match status" value="1"/>
</dbReference>
<dbReference type="Pfam" id="PF08569">
    <property type="entry name" value="Mo25"/>
    <property type="match status" value="1"/>
</dbReference>
<dbReference type="SUPFAM" id="SSF48371">
    <property type="entry name" value="ARM repeat"/>
    <property type="match status" value="1"/>
</dbReference>
<evidence type="ECO:0000256" key="1">
    <source>
        <dbReference type="SAM" id="MobiDB-lite"/>
    </source>
</evidence>
<evidence type="ECO:0000269" key="2">
    <source>
    </source>
</evidence>
<evidence type="ECO:0000305" key="3"/>
<name>HYM1_YEAST</name>
<accession>P32464</accession>
<accession>D6VX11</accession>
<keyword id="KW-1185">Reference proteome</keyword>
<comment type="interaction">
    <interactant intactId="EBI-8859">
        <id>P32464</id>
    </interactant>
    <interactant intactId="EBI-12253">
        <id>P38692</id>
        <label>KIC1</label>
    </interactant>
    <organismsDiffer>false</organismsDiffer>
    <experiments>4</experiments>
</comment>
<comment type="interaction">
    <interactant intactId="EBI-8859">
        <id>P32464</id>
    </interactant>
    <interactant intactId="EBI-30849">
        <id>Q08817</id>
        <label>SOG2</label>
    </interactant>
    <organismsDiffer>false</organismsDiffer>
    <experiments>3</experiments>
</comment>
<comment type="miscellaneous">
    <text evidence="2">Present with 1280 molecules/cell in log phase SD medium.</text>
</comment>
<comment type="similarity">
    <text evidence="3">Belongs to the Mo25 family.</text>
</comment>
<protein>
    <recommendedName>
        <fullName>Protein HYM1</fullName>
    </recommendedName>
</protein>
<proteinExistence type="evidence at protein level"/>
<organism>
    <name type="scientific">Saccharomyces cerevisiae (strain ATCC 204508 / S288c)</name>
    <name type="common">Baker's yeast</name>
    <dbReference type="NCBI Taxonomy" id="559292"/>
    <lineage>
        <taxon>Eukaryota</taxon>
        <taxon>Fungi</taxon>
        <taxon>Dikarya</taxon>
        <taxon>Ascomycota</taxon>
        <taxon>Saccharomycotina</taxon>
        <taxon>Saccharomycetes</taxon>
        <taxon>Saccharomycetales</taxon>
        <taxon>Saccharomycetaceae</taxon>
        <taxon>Saccharomyces</taxon>
    </lineage>
</organism>
<gene>
    <name type="primary">HYM1</name>
    <name type="ordered locus">YKL189W</name>
</gene>
<feature type="chain" id="PRO_0000209836" description="Protein HYM1">
    <location>
        <begin position="1"/>
        <end position="399"/>
    </location>
</feature>
<feature type="region of interest" description="Disordered" evidence="1">
    <location>
        <begin position="363"/>
        <end position="399"/>
    </location>
</feature>
<feature type="compositionally biased region" description="Low complexity" evidence="1">
    <location>
        <begin position="363"/>
        <end position="382"/>
    </location>
</feature>
<feature type="compositionally biased region" description="Polar residues" evidence="1">
    <location>
        <begin position="383"/>
        <end position="399"/>
    </location>
</feature>
<sequence>MFKKYKNQDLDMAFWWKKNPKTPSDYARLIIEQLNKFSSPSLTQDNKRKVQEECTKYLIGTKHFIVGDTDPHPTPEAIDELYTAMHRADVFYELLLHFVDLEFEARRECMLIFSICLGYSKDNKFVTVDYLVSQPKTISLMLRTAEVALQQKGCQDIFLTVGNMIIECIKYEQLCRIILKDPQLWKFFEFAKLGNFEISTESLQILSAAFTAHPKLVSKEFFSNEINIIRFIKCINKLMAHGSYVTKRQSTKLLASLIVIRSNNALMNIYINSPENLKLIMTLMTDKSKNLQLEAFNVFKVMVANPRKSKPVFDILVKNRDKLLTYFKTFGLDSQDSTFLDEREFIVQEIDSLPRIISSTTEVSNNNASSSNVASITSPSSVMNNQSSILTHSTSPDSR</sequence>
<reference key="1">
    <citation type="journal article" date="1993" name="Yeast">
        <title>DNA sequence analysis of the YCN2 region of chromosome XI in Saccharomyces cerevisiae.</title>
        <authorList>
            <person name="Cheret G."/>
            <person name="Mattheakis L.C."/>
            <person name="Sor F."/>
        </authorList>
    </citation>
    <scope>NUCLEOTIDE SEQUENCE [GENOMIC DNA]</scope>
    <source>
        <strain>S288c / GRF88</strain>
    </source>
</reference>
<reference key="2">
    <citation type="journal article" date="1993" name="Yeast">
        <title>Sequencing and analysis of 51.6 kilobases on the left arm of chromosome XI from Saccharomyces cerevisiae reveals 23 open reading frames including the FAS1 gene.</title>
        <authorList>
            <person name="Wiemann S."/>
            <person name="Voss H."/>
            <person name="Schwager C."/>
            <person name="Rupp T."/>
            <person name="Stegemann J."/>
            <person name="Zimmermann J."/>
            <person name="Grothues D."/>
            <person name="Sensen C."/>
            <person name="Erfle H."/>
            <person name="Hewitt N."/>
            <person name="Banrevi A."/>
            <person name="Ansorge W."/>
        </authorList>
    </citation>
    <scope>NUCLEOTIDE SEQUENCE [GENOMIC DNA]</scope>
</reference>
<reference key="3">
    <citation type="journal article" date="1994" name="Nature">
        <title>Complete DNA sequence of yeast chromosome XI.</title>
        <authorList>
            <person name="Dujon B."/>
            <person name="Alexandraki D."/>
            <person name="Andre B."/>
            <person name="Ansorge W."/>
            <person name="Baladron V."/>
            <person name="Ballesta J.P.G."/>
            <person name="Banrevi A."/>
            <person name="Bolle P.-A."/>
            <person name="Bolotin-Fukuhara M."/>
            <person name="Bossier P."/>
            <person name="Bou G."/>
            <person name="Boyer J."/>
            <person name="Buitrago M.J."/>
            <person name="Cheret G."/>
            <person name="Colleaux L."/>
            <person name="Daignan-Fornier B."/>
            <person name="del Rey F."/>
            <person name="Dion C."/>
            <person name="Domdey H."/>
            <person name="Duesterhoeft A."/>
            <person name="Duesterhus S."/>
            <person name="Entian K.-D."/>
            <person name="Erfle H."/>
            <person name="Esteban P.F."/>
            <person name="Feldmann H."/>
            <person name="Fernandes L."/>
            <person name="Fobo G.M."/>
            <person name="Fritz C."/>
            <person name="Fukuhara H."/>
            <person name="Gabel C."/>
            <person name="Gaillon L."/>
            <person name="Garcia-Cantalejo J.M."/>
            <person name="Garcia-Ramirez J.J."/>
            <person name="Gent M.E."/>
            <person name="Ghazvini M."/>
            <person name="Goffeau A."/>
            <person name="Gonzalez A."/>
            <person name="Grothues D."/>
            <person name="Guerreiro P."/>
            <person name="Hegemann J.H."/>
            <person name="Hewitt N."/>
            <person name="Hilger F."/>
            <person name="Hollenberg C.P."/>
            <person name="Horaitis O."/>
            <person name="Indge K.J."/>
            <person name="Jacquier A."/>
            <person name="James C.M."/>
            <person name="Jauniaux J.-C."/>
            <person name="Jimenez A."/>
            <person name="Keuchel H."/>
            <person name="Kirchrath L."/>
            <person name="Kleine K."/>
            <person name="Koetter P."/>
            <person name="Legrain P."/>
            <person name="Liebl S."/>
            <person name="Louis E.J."/>
            <person name="Maia e Silva A."/>
            <person name="Marck C."/>
            <person name="Monnier A.-L."/>
            <person name="Moestl D."/>
            <person name="Mueller S."/>
            <person name="Obermaier B."/>
            <person name="Oliver S.G."/>
            <person name="Pallier C."/>
            <person name="Pascolo S."/>
            <person name="Pfeiffer F."/>
            <person name="Philippsen P."/>
            <person name="Planta R.J."/>
            <person name="Pohl F.M."/>
            <person name="Pohl T.M."/>
            <person name="Poehlmann R."/>
            <person name="Portetelle D."/>
            <person name="Purnelle B."/>
            <person name="Puzos V."/>
            <person name="Ramezani Rad M."/>
            <person name="Rasmussen S.W."/>
            <person name="Remacha M.A."/>
            <person name="Revuelta J.L."/>
            <person name="Richard G.-F."/>
            <person name="Rieger M."/>
            <person name="Rodrigues-Pousada C."/>
            <person name="Rose M."/>
            <person name="Rupp T."/>
            <person name="Santos M.A."/>
            <person name="Schwager C."/>
            <person name="Sensen C."/>
            <person name="Skala J."/>
            <person name="Soares H."/>
            <person name="Sor F."/>
            <person name="Stegemann J."/>
            <person name="Tettelin H."/>
            <person name="Thierry A."/>
            <person name="Tzermia M."/>
            <person name="Urrestarazu L.A."/>
            <person name="van Dyck L."/>
            <person name="van Vliet-Reedijk J.C."/>
            <person name="Valens M."/>
            <person name="Vandenbol M."/>
            <person name="Vilela C."/>
            <person name="Vissers S."/>
            <person name="von Wettstein D."/>
            <person name="Voss H."/>
            <person name="Wiemann S."/>
            <person name="Xu G."/>
            <person name="Zimmermann J."/>
            <person name="Haasemann M."/>
            <person name="Becker I."/>
            <person name="Mewes H.-W."/>
        </authorList>
    </citation>
    <scope>NUCLEOTIDE SEQUENCE [LARGE SCALE GENOMIC DNA]</scope>
    <source>
        <strain>ATCC 204508 / S288c</strain>
    </source>
</reference>
<reference key="4">
    <citation type="journal article" date="2014" name="G3 (Bethesda)">
        <title>The reference genome sequence of Saccharomyces cerevisiae: Then and now.</title>
        <authorList>
            <person name="Engel S.R."/>
            <person name="Dietrich F.S."/>
            <person name="Fisk D.G."/>
            <person name="Binkley G."/>
            <person name="Balakrishnan R."/>
            <person name="Costanzo M.C."/>
            <person name="Dwight S.S."/>
            <person name="Hitz B.C."/>
            <person name="Karra K."/>
            <person name="Nash R.S."/>
            <person name="Weng S."/>
            <person name="Wong E.D."/>
            <person name="Lloyd P."/>
            <person name="Skrzypek M.S."/>
            <person name="Miyasato S.R."/>
            <person name="Simison M."/>
            <person name="Cherry J.M."/>
        </authorList>
    </citation>
    <scope>GENOME REANNOTATION</scope>
    <source>
        <strain>ATCC 204508 / S288c</strain>
    </source>
</reference>
<reference key="5">
    <citation type="journal article" date="2000" name="Genetics">
        <title>Roles for the Saccharomyces cerevisiae SDS3, CBK1 and HYM1 genes in transcriptional repression by SIN3.</title>
        <authorList>
            <person name="Dorland S."/>
            <person name="Deegenaars M.L."/>
            <person name="Stillman D.J."/>
        </authorList>
    </citation>
    <scope>GENE NAME</scope>
</reference>
<reference key="6">
    <citation type="journal article" date="2003" name="Nature">
        <title>Global analysis of protein expression in yeast.</title>
        <authorList>
            <person name="Ghaemmaghami S."/>
            <person name="Huh W.-K."/>
            <person name="Bower K."/>
            <person name="Howson R.W."/>
            <person name="Belle A."/>
            <person name="Dephoure N."/>
            <person name="O'Shea E.K."/>
            <person name="Weissman J.S."/>
        </authorList>
    </citation>
    <scope>LEVEL OF PROTEIN EXPRESSION [LARGE SCALE ANALYSIS]</scope>
</reference>